<proteinExistence type="evidence at protein level"/>
<protein>
    <recommendedName>
        <fullName evidence="4">Transmembrane protein 131 homolog</fullName>
    </recommendedName>
</protein>
<sequence>MVPSIHKTSNRYRTIYFFLISLLITSTFADQQAWPLPEEVSASQLHEIPVLHTAFVQIGEELHYLNHPIRPENVHQLPVYDSIKGVCEGNCPKEANKNHATKTFNVLKLSGKGKLPMEMDPPMMDFGQNSVGTAQKRKIYIRNMRNEQIFLDAVVVNSIEFQASYFEQYKLEPHGVTSLEVVFLPREIGKRSTIVHFYTSVGVFTYKMQGNCDSNPYRISPFTGYRLPMNSSISKPIVIFNPYAYTMRITEIGTSGGNAHIELPHEVDSKLAEEPLQYWDIRPYQSKQIATLVLVGATSENSTVFVRIGSEIYLSSEHRKPNTDIYLTVPIEVLKRRGVYATDEILDFGLIRQGMKSEAKVFSVVQYQIGGRLEFETLYVEKGDHTAIYMEFASHPPIIVYPPTKGSVTLGPKADLVKVYLEGNRVQMSPQQQMKHISGHIIAVSRGGNYNVSIPYRADVFRGDLLPIGNDLSIQEDLRPPHQRIIRIENQLPFDVAIFNITLAPELVSHFSVRLIDRTALIRSGHISPVFVLKYNKKLPPTFDNSTIYLHTNVSTFNLSLSTYTGRMNVELISVDKNSFDFGFVERNDTRTIRFVVWNHNRAEMRLKNLAVPHRSAYRLYEVGVKSIGNFSDVRNDERLEYVEATDVDIPPMKGKIFDLELKVPSDGVVRNGNIIFETDLESKIFGVTYQVSTGSLQSIPEEICFGQTFPSKLVYRTLQVFNSFDEDMTVTRLTTLNEDPRFFFEGFDPKNPPVLRSGRLTNLGRVMFSPSAPCEHDYCYLGLPLGSSDGAWFTHGLTLPSNLPEIDSYLYKQLRKKYDALVNSGKHHINTTIILDTDKAKNIKIKTSAELVWPRLLTRNSIHFPLTALGNFTIVNLTLANPTNVPVAIQVIPLVIYPDAESLVELMRPNLVSELTDHVEMNETLMFSLRDTELFTLKSDSPVPKLREAFEYHLNHEMPRYNNEINIPRFTLSMILKPHMKIRLRLGFLPSDYTLRSSLLLIRNNLTAIEPVVMYGKGARIGVKVEGAEARSKKPLLFEIRHDHLTDCNNPKRLMHKLHSTLTVRRPFQVMNSGEVQFTVTNMSINGVPCENRGFRILNCYPFRLQPNETYALDIAYTPDFLTTTNEADLQLYMHMNGSAWIFPLASTVPGDMLAKCHQALPRPPFENIMYYSCVTALIFCLVCVLACAYLEGDRAIAVAIRQQFAIPRHVFDLNNLNKNNSTTTPVPTVPSTAKPESSIKKPTPATRPSTLRASSDAWLISRLLIGLANFIVKCVHLFWKWSLFWRREKADDKQSKSAKVTKKKNPVTMQKVEEFRQMLEYVGQQKRQQNSGELAPEFDEVEEEELAEMWAQRKDSGAQSSVVTDPEPPMSKSQRKKKRAAQQKENNNLEAPIIVQPVVQSPPVQNKMEPAKKTTPGPSPKPKGNNQRKKHVQVPPVTKTPVTPKTSIPPPTEPEKPIKPSEQKKPNAIPVERPKQPTPSKARTPSKTPSQSNRAQHPASSPAPIAPTSAPTDDFVHVPPTSLTSPDLFYRQFLSSMGMPMDAGMWDTPAAQAAMPFMNLWNYGGPLSAEQMEDLIRQASGVAPITNDSEGTTVTTPSDIGMTWGTSGHLGGDEESIGGEAAPDWIDEDVNVDDAEMDFSSMSAASKDIFKDDDIDNFNQQMKRQRSPSQASSTLSRKLENSPQKMGSRRLTIGSEKKNNQSSSSALNPNYDFTRTPGNPNRMQMSQNSIQPAPPATSIWGDNSNSDPWGTNTVSNPLSELEDDPLSLSHLGINLASTESSATGPMFTMFSGPEFNLWSSSSLFHPPTQQPSTSQMPQDTDNENDEKNN</sequence>
<organism evidence="5">
    <name type="scientific">Caenorhabditis elegans</name>
    <dbReference type="NCBI Taxonomy" id="6239"/>
    <lineage>
        <taxon>Eukaryota</taxon>
        <taxon>Metazoa</taxon>
        <taxon>Ecdysozoa</taxon>
        <taxon>Nematoda</taxon>
        <taxon>Chromadorea</taxon>
        <taxon>Rhabditida</taxon>
        <taxon>Rhabditina</taxon>
        <taxon>Rhabditomorpha</taxon>
        <taxon>Rhabditoidea</taxon>
        <taxon>Rhabditidae</taxon>
        <taxon>Peloderinae</taxon>
        <taxon>Caenorhabditis</taxon>
    </lineage>
</organism>
<dbReference type="EMBL" id="BX284603">
    <property type="protein sequence ID" value="CCD65748.1"/>
    <property type="molecule type" value="Genomic_DNA"/>
</dbReference>
<dbReference type="RefSeq" id="NP_498059.2">
    <property type="nucleotide sequence ID" value="NM_065658.8"/>
</dbReference>
<dbReference type="DIP" id="DIP-26360N"/>
<dbReference type="FunCoup" id="Q18264">
    <property type="interactions" value="2955"/>
</dbReference>
<dbReference type="IntAct" id="Q18264">
    <property type="interactions" value="1"/>
</dbReference>
<dbReference type="STRING" id="6239.C27F2.8.1"/>
<dbReference type="PaxDb" id="6239-C27F2.8"/>
<dbReference type="PeptideAtlas" id="Q18264"/>
<dbReference type="EnsemblMetazoa" id="C27F2.8.1">
    <property type="protein sequence ID" value="C27F2.8.1"/>
    <property type="gene ID" value="WBGene00016170"/>
</dbReference>
<dbReference type="GeneID" id="175677"/>
<dbReference type="KEGG" id="cel:CELE_C27F2.8"/>
<dbReference type="UCSC" id="C27F2.8">
    <property type="organism name" value="c. elegans"/>
</dbReference>
<dbReference type="AGR" id="WB:WBGene00016170"/>
<dbReference type="CTD" id="175677"/>
<dbReference type="WormBase" id="C27F2.8">
    <property type="protein sequence ID" value="CE39000"/>
    <property type="gene ID" value="WBGene00016170"/>
    <property type="gene designation" value="tmem-131"/>
</dbReference>
<dbReference type="eggNOG" id="KOG3620">
    <property type="taxonomic scope" value="Eukaryota"/>
</dbReference>
<dbReference type="GeneTree" id="ENSGT00530000063614"/>
<dbReference type="HOGENOM" id="CLU_003107_0_0_1"/>
<dbReference type="InParanoid" id="Q18264"/>
<dbReference type="OMA" id="CFPGKLC"/>
<dbReference type="OrthoDB" id="168404at2759"/>
<dbReference type="PhylomeDB" id="Q18264"/>
<dbReference type="Proteomes" id="UP000001940">
    <property type="component" value="Chromosome III"/>
</dbReference>
<dbReference type="Bgee" id="WBGene00016170">
    <property type="expression patterns" value="Expressed in germ line (C elegans) and 4 other cell types or tissues"/>
</dbReference>
<dbReference type="GO" id="GO:0005789">
    <property type="term" value="C:endoplasmic reticulum membrane"/>
    <property type="evidence" value="ECO:0000314"/>
    <property type="project" value="UniProtKB"/>
</dbReference>
<dbReference type="GO" id="GO:0016020">
    <property type="term" value="C:membrane"/>
    <property type="evidence" value="ECO:0000318"/>
    <property type="project" value="GO_Central"/>
</dbReference>
<dbReference type="GO" id="GO:0032964">
    <property type="term" value="P:collagen biosynthetic process"/>
    <property type="evidence" value="ECO:0000315"/>
    <property type="project" value="UniProtKB"/>
</dbReference>
<dbReference type="InterPro" id="IPR056311">
    <property type="entry name" value="Ig_TMEM131_2"/>
</dbReference>
<dbReference type="InterPro" id="IPR055436">
    <property type="entry name" value="Ig_TMEM131L_4"/>
</dbReference>
<dbReference type="InterPro" id="IPR055437">
    <property type="entry name" value="Ig_TMEM131L_5"/>
</dbReference>
<dbReference type="InterPro" id="IPR039877">
    <property type="entry name" value="TMEM131-like"/>
</dbReference>
<dbReference type="InterPro" id="IPR022113">
    <property type="entry name" value="TMEM131-like_N"/>
</dbReference>
<dbReference type="PANTHER" id="PTHR22050">
    <property type="entry name" value="RW1 PROTEIN HOMOLOG"/>
    <property type="match status" value="1"/>
</dbReference>
<dbReference type="PANTHER" id="PTHR22050:SF0">
    <property type="entry name" value="TRANSMEMBRANE PROTEIN 131 HOMOLOG"/>
    <property type="match status" value="1"/>
</dbReference>
<dbReference type="Pfam" id="PF24495">
    <property type="entry name" value="Ig_TMEM131_2"/>
    <property type="match status" value="1"/>
</dbReference>
<dbReference type="Pfam" id="PF24499">
    <property type="entry name" value="Ig_TMEM131L_4"/>
    <property type="match status" value="1"/>
</dbReference>
<dbReference type="Pfam" id="PF24501">
    <property type="entry name" value="Ig_TMEM131L_5"/>
    <property type="match status" value="1"/>
</dbReference>
<dbReference type="Pfam" id="PF12371">
    <property type="entry name" value="TMEM131_like_N"/>
    <property type="match status" value="1"/>
</dbReference>
<comment type="function">
    <text evidence="3">Collagen binding transmembrane protein involved in collagen secretion, probably by recruiting the ER-to-Golgi transport complex TRAPPIII (PubMed:32095531). Required for normal development (PubMed:32095531).</text>
</comment>
<comment type="subunit">
    <text evidence="3">May interact (via PapD-L domain) with collagen proteins (via C-terminus); the interaction is direct and is involved in assembly and secretion of collagen.</text>
</comment>
<comment type="subcellular location">
    <subcellularLocation>
        <location evidence="1">Membrane</location>
        <topology evidence="1">Single-pass type I membrane protein</topology>
    </subcellularLocation>
    <subcellularLocation>
        <location evidence="3">Endoplasmic reticulum membrane</location>
    </subcellularLocation>
</comment>
<comment type="tissue specificity">
    <text evidence="3">Predominantly expressed in the intestine and hypodermis.</text>
</comment>
<comment type="domain">
    <text evidence="3">Possesses a PapD-like (PapD-L) domain similar to bacterial PapD domains involved in assembly and secretion of bacterial pilus components (PubMed:32095531). The PapD-L domain can bind collagens and is essential for collagen assembly and secretion (PubMed:32095531).</text>
</comment>
<comment type="disruption phenotype">
    <text evidence="3">RNAi-mediated knockdown reduces the abundance of collagen in the cuticle, retards development and increases sensitivity to high temperature, ER stress and cuticle disrupting osmotic stress.</text>
</comment>
<comment type="similarity">
    <text evidence="4">Belongs to the TMEM131 family.</text>
</comment>
<evidence type="ECO:0000255" key="1"/>
<evidence type="ECO:0000256" key="2">
    <source>
        <dbReference type="SAM" id="MobiDB-lite"/>
    </source>
</evidence>
<evidence type="ECO:0000269" key="3">
    <source>
    </source>
</evidence>
<evidence type="ECO:0000305" key="4"/>
<evidence type="ECO:0000312" key="5">
    <source>
        <dbReference type="Proteomes" id="UP000001940"/>
    </source>
</evidence>
<evidence type="ECO:0000312" key="6">
    <source>
        <dbReference type="WormBase" id="C27F2.8"/>
    </source>
</evidence>
<reference evidence="5" key="1">
    <citation type="journal article" date="1998" name="Science">
        <title>Genome sequence of the nematode C. elegans: a platform for investigating biology.</title>
        <authorList>
            <consortium name="The C. elegans sequencing consortium"/>
        </authorList>
    </citation>
    <scope>NUCLEOTIDE SEQUENCE [LARGE SCALE GENOMIC DNA]</scope>
    <source>
        <strain evidence="5">Bristol N2</strain>
    </source>
</reference>
<reference evidence="4" key="2">
    <citation type="journal article" date="2020" name="Sci. Adv.">
        <title>Broadly conserved roles of TMEM131 family proteins in intracellular collagen assembly and secretory cargo trafficking.</title>
        <authorList>
            <person name="Zhang Z."/>
            <person name="Bai M."/>
            <person name="Barbosa G.O."/>
            <person name="Chen A."/>
            <person name="Wei Y."/>
            <person name="Luo S."/>
            <person name="Wang X."/>
            <person name="Wang B."/>
            <person name="Tsukui T."/>
            <person name="Li H."/>
            <person name="Sheppard D."/>
            <person name="Kornberg T.B."/>
            <person name="Ma D.K."/>
        </authorList>
    </citation>
    <scope>FUNCTION</scope>
    <scope>INTERACTION WITH COLLAGEN</scope>
    <scope>SUBCELLULAR LOCATION</scope>
    <scope>TISSUE SPECIFICITY</scope>
    <scope>DOMAIN PAPD-L</scope>
    <scope>DISRUPTION PHENOTYPE</scope>
</reference>
<gene>
    <name evidence="6" type="primary">tmem-131</name>
    <name evidence="6" type="ORF">C27F2.8</name>
</gene>
<accession>Q18264</accession>
<accession>G4S3K6</accession>
<name>TM131_CAEEL</name>
<feature type="signal peptide" evidence="1">
    <location>
        <begin position="1"/>
        <end position="29"/>
    </location>
</feature>
<feature type="chain" id="PRO_5005693426" description="Transmembrane protein 131 homolog" evidence="1">
    <location>
        <begin position="30"/>
        <end position="1831"/>
    </location>
</feature>
<feature type="topological domain" description="Lumenal" evidence="4">
    <location>
        <begin position="30"/>
        <end position="1169"/>
    </location>
</feature>
<feature type="transmembrane region" description="Helical" evidence="1">
    <location>
        <begin position="1170"/>
        <end position="1190"/>
    </location>
</feature>
<feature type="topological domain" description="Cytoplasmic" evidence="4">
    <location>
        <begin position="1191"/>
        <end position="1831"/>
    </location>
</feature>
<feature type="region of interest" description="PapD-L domain" evidence="3">
    <location>
        <begin position="118"/>
        <end position="294"/>
    </location>
</feature>
<feature type="region of interest" description="Disordered" evidence="2">
    <location>
        <begin position="1223"/>
        <end position="1252"/>
    </location>
</feature>
<feature type="region of interest" description="Disordered" evidence="2">
    <location>
        <begin position="1325"/>
        <end position="1516"/>
    </location>
</feature>
<feature type="region of interest" description="Disordered" evidence="2">
    <location>
        <begin position="1663"/>
        <end position="1759"/>
    </location>
</feature>
<feature type="region of interest" description="Disordered" evidence="2">
    <location>
        <begin position="1800"/>
        <end position="1831"/>
    </location>
</feature>
<feature type="compositionally biased region" description="Low complexity" evidence="2">
    <location>
        <begin position="1223"/>
        <end position="1234"/>
    </location>
</feature>
<feature type="compositionally biased region" description="Acidic residues" evidence="2">
    <location>
        <begin position="1338"/>
        <end position="1349"/>
    </location>
</feature>
<feature type="compositionally biased region" description="Low complexity" evidence="2">
    <location>
        <begin position="1394"/>
        <end position="1407"/>
    </location>
</feature>
<feature type="compositionally biased region" description="Low complexity" evidence="2">
    <location>
        <begin position="1435"/>
        <end position="1448"/>
    </location>
</feature>
<feature type="compositionally biased region" description="Basic and acidic residues" evidence="2">
    <location>
        <begin position="1455"/>
        <end position="1467"/>
    </location>
</feature>
<feature type="compositionally biased region" description="Polar residues" evidence="2">
    <location>
        <begin position="1480"/>
        <end position="1497"/>
    </location>
</feature>
<feature type="compositionally biased region" description="Low complexity" evidence="2">
    <location>
        <begin position="1500"/>
        <end position="1514"/>
    </location>
</feature>
<feature type="compositionally biased region" description="Polar residues" evidence="2">
    <location>
        <begin position="1669"/>
        <end position="1687"/>
    </location>
</feature>
<feature type="compositionally biased region" description="Polar residues" evidence="2">
    <location>
        <begin position="1702"/>
        <end position="1733"/>
    </location>
</feature>
<feature type="compositionally biased region" description="Polar residues" evidence="2">
    <location>
        <begin position="1742"/>
        <end position="1758"/>
    </location>
</feature>
<feature type="compositionally biased region" description="Low complexity" evidence="2">
    <location>
        <begin position="1808"/>
        <end position="1820"/>
    </location>
</feature>
<feature type="compositionally biased region" description="Acidic residues" evidence="2">
    <location>
        <begin position="1822"/>
        <end position="1831"/>
    </location>
</feature>
<keyword id="KW-0256">Endoplasmic reticulum</keyword>
<keyword id="KW-0472">Membrane</keyword>
<keyword id="KW-1185">Reference proteome</keyword>
<keyword id="KW-0732">Signal</keyword>
<keyword id="KW-0812">Transmembrane</keyword>
<keyword id="KW-1133">Transmembrane helix</keyword>